<gene>
    <name evidence="1" type="primary">rimM</name>
    <name type="ordered locus">STH1469</name>
</gene>
<keyword id="KW-0143">Chaperone</keyword>
<keyword id="KW-0963">Cytoplasm</keyword>
<keyword id="KW-1185">Reference proteome</keyword>
<keyword id="KW-0690">Ribosome biogenesis</keyword>
<keyword id="KW-0698">rRNA processing</keyword>
<reference key="1">
    <citation type="journal article" date="2004" name="Nucleic Acids Res.">
        <title>Genome sequence of Symbiobacterium thermophilum, an uncultivable bacterium that depends on microbial commensalism.</title>
        <authorList>
            <person name="Ueda K."/>
            <person name="Yamashita A."/>
            <person name="Ishikawa J."/>
            <person name="Shimada M."/>
            <person name="Watsuji T."/>
            <person name="Morimura K."/>
            <person name="Ikeda H."/>
            <person name="Hattori M."/>
            <person name="Beppu T."/>
        </authorList>
    </citation>
    <scope>NUCLEOTIDE SEQUENCE [LARGE SCALE GENOMIC DNA]</scope>
    <source>
        <strain>DSM 24528 / JCM 14929 / IAM 14863 / T</strain>
    </source>
</reference>
<dbReference type="EMBL" id="AP006840">
    <property type="protein sequence ID" value="BAD40454.1"/>
    <property type="molecule type" value="Genomic_DNA"/>
</dbReference>
<dbReference type="RefSeq" id="WP_011195599.1">
    <property type="nucleotide sequence ID" value="NC_006177.1"/>
</dbReference>
<dbReference type="SMR" id="Q67PD9"/>
<dbReference type="STRING" id="292459.STH1469"/>
<dbReference type="KEGG" id="sth:STH1469"/>
<dbReference type="eggNOG" id="COG0806">
    <property type="taxonomic scope" value="Bacteria"/>
</dbReference>
<dbReference type="HOGENOM" id="CLU_077636_3_2_9"/>
<dbReference type="OrthoDB" id="9810331at2"/>
<dbReference type="Proteomes" id="UP000000417">
    <property type="component" value="Chromosome"/>
</dbReference>
<dbReference type="GO" id="GO:0005737">
    <property type="term" value="C:cytoplasm"/>
    <property type="evidence" value="ECO:0007669"/>
    <property type="project" value="UniProtKB-SubCell"/>
</dbReference>
<dbReference type="GO" id="GO:0005840">
    <property type="term" value="C:ribosome"/>
    <property type="evidence" value="ECO:0007669"/>
    <property type="project" value="InterPro"/>
</dbReference>
<dbReference type="GO" id="GO:0043022">
    <property type="term" value="F:ribosome binding"/>
    <property type="evidence" value="ECO:0007669"/>
    <property type="project" value="InterPro"/>
</dbReference>
<dbReference type="GO" id="GO:0042274">
    <property type="term" value="P:ribosomal small subunit biogenesis"/>
    <property type="evidence" value="ECO:0007669"/>
    <property type="project" value="UniProtKB-UniRule"/>
</dbReference>
<dbReference type="GO" id="GO:0006364">
    <property type="term" value="P:rRNA processing"/>
    <property type="evidence" value="ECO:0007669"/>
    <property type="project" value="UniProtKB-UniRule"/>
</dbReference>
<dbReference type="Gene3D" id="2.30.30.240">
    <property type="entry name" value="PRC-barrel domain"/>
    <property type="match status" value="1"/>
</dbReference>
<dbReference type="Gene3D" id="2.40.30.60">
    <property type="entry name" value="RimM"/>
    <property type="match status" value="1"/>
</dbReference>
<dbReference type="HAMAP" id="MF_00014">
    <property type="entry name" value="Ribosome_mat_RimM"/>
    <property type="match status" value="1"/>
</dbReference>
<dbReference type="InterPro" id="IPR011033">
    <property type="entry name" value="PRC_barrel-like_sf"/>
</dbReference>
<dbReference type="InterPro" id="IPR056792">
    <property type="entry name" value="PRC_RimM"/>
</dbReference>
<dbReference type="InterPro" id="IPR011961">
    <property type="entry name" value="RimM"/>
</dbReference>
<dbReference type="InterPro" id="IPR002676">
    <property type="entry name" value="RimM_N"/>
</dbReference>
<dbReference type="InterPro" id="IPR036976">
    <property type="entry name" value="RimM_N_sf"/>
</dbReference>
<dbReference type="InterPro" id="IPR009000">
    <property type="entry name" value="Transl_B-barrel_sf"/>
</dbReference>
<dbReference type="NCBIfam" id="TIGR02273">
    <property type="entry name" value="16S_RimM"/>
    <property type="match status" value="1"/>
</dbReference>
<dbReference type="PANTHER" id="PTHR33692">
    <property type="entry name" value="RIBOSOME MATURATION FACTOR RIMM"/>
    <property type="match status" value="1"/>
</dbReference>
<dbReference type="PANTHER" id="PTHR33692:SF1">
    <property type="entry name" value="RIBOSOME MATURATION FACTOR RIMM"/>
    <property type="match status" value="1"/>
</dbReference>
<dbReference type="Pfam" id="PF24986">
    <property type="entry name" value="PRC_RimM"/>
    <property type="match status" value="1"/>
</dbReference>
<dbReference type="Pfam" id="PF01782">
    <property type="entry name" value="RimM"/>
    <property type="match status" value="1"/>
</dbReference>
<dbReference type="SUPFAM" id="SSF50346">
    <property type="entry name" value="PRC-barrel domain"/>
    <property type="match status" value="1"/>
</dbReference>
<dbReference type="SUPFAM" id="SSF50447">
    <property type="entry name" value="Translation proteins"/>
    <property type="match status" value="1"/>
</dbReference>
<name>RIMM_SYMTH</name>
<proteinExistence type="inferred from homology"/>
<accession>Q67PD9</accession>
<organism>
    <name type="scientific">Symbiobacterium thermophilum (strain DSM 24528 / JCM 14929 / IAM 14863 / T)</name>
    <dbReference type="NCBI Taxonomy" id="292459"/>
    <lineage>
        <taxon>Bacteria</taxon>
        <taxon>Bacillati</taxon>
        <taxon>Bacillota</taxon>
        <taxon>Clostridia</taxon>
        <taxon>Eubacteriales</taxon>
        <taxon>Symbiobacteriaceae</taxon>
        <taxon>Symbiobacterium</taxon>
    </lineage>
</organism>
<evidence type="ECO:0000255" key="1">
    <source>
        <dbReference type="HAMAP-Rule" id="MF_00014"/>
    </source>
</evidence>
<sequence>MAGQSRPDLIRIGQVTAPHGVRGAVRVYPTTDFPERFVTLKRVMIDGPDRAVGARFRGFVKNLVILELEGITDRNQAERLRGADLLVPREEVHPLPEGYYYDFDIIGIEVVDPDGRQLGRVVEVDHTSPVHDLYVVETAPGKRYLVPAVRRFVKEIDLETGRMVIDPIPGLLED</sequence>
<comment type="function">
    <text evidence="1">An accessory protein needed during the final step in the assembly of 30S ribosomal subunit, possibly for assembly of the head region. Essential for efficient processing of 16S rRNA. May be needed both before and after RbfA during the maturation of 16S rRNA. It has affinity for free ribosomal 30S subunits but not for 70S ribosomes.</text>
</comment>
<comment type="subunit">
    <text evidence="1">Binds ribosomal protein uS19.</text>
</comment>
<comment type="subcellular location">
    <subcellularLocation>
        <location evidence="1">Cytoplasm</location>
    </subcellularLocation>
</comment>
<comment type="domain">
    <text evidence="1">The PRC barrel domain binds ribosomal protein uS19.</text>
</comment>
<comment type="similarity">
    <text evidence="1">Belongs to the RimM family.</text>
</comment>
<feature type="chain" id="PRO_0000163373" description="Ribosome maturation factor RimM">
    <location>
        <begin position="1"/>
        <end position="174"/>
    </location>
</feature>
<feature type="domain" description="PRC barrel" evidence="1">
    <location>
        <begin position="97"/>
        <end position="171"/>
    </location>
</feature>
<protein>
    <recommendedName>
        <fullName evidence="1">Ribosome maturation factor RimM</fullName>
    </recommendedName>
</protein>